<feature type="chain" id="PRO_0000345728" description="tRNA modification GTPase MnmE">
    <location>
        <begin position="1"/>
        <end position="442"/>
    </location>
</feature>
<feature type="domain" description="TrmE-type G">
    <location>
        <begin position="221"/>
        <end position="366"/>
    </location>
</feature>
<feature type="binding site" evidence="1">
    <location>
        <position position="27"/>
    </location>
    <ligand>
        <name>(6S)-5-formyl-5,6,7,8-tetrahydrofolate</name>
        <dbReference type="ChEBI" id="CHEBI:57457"/>
    </ligand>
</feature>
<feature type="binding site" evidence="1">
    <location>
        <position position="84"/>
    </location>
    <ligand>
        <name>(6S)-5-formyl-5,6,7,8-tetrahydrofolate</name>
        <dbReference type="ChEBI" id="CHEBI:57457"/>
    </ligand>
</feature>
<feature type="binding site" evidence="1">
    <location>
        <position position="124"/>
    </location>
    <ligand>
        <name>(6S)-5-formyl-5,6,7,8-tetrahydrofolate</name>
        <dbReference type="ChEBI" id="CHEBI:57457"/>
    </ligand>
</feature>
<feature type="binding site" evidence="1">
    <location>
        <begin position="231"/>
        <end position="236"/>
    </location>
    <ligand>
        <name>GTP</name>
        <dbReference type="ChEBI" id="CHEBI:37565"/>
    </ligand>
</feature>
<feature type="binding site" evidence="1">
    <location>
        <position position="235"/>
    </location>
    <ligand>
        <name>Mg(2+)</name>
        <dbReference type="ChEBI" id="CHEBI:18420"/>
    </ligand>
</feature>
<feature type="binding site" evidence="1">
    <location>
        <begin position="250"/>
        <end position="256"/>
    </location>
    <ligand>
        <name>GTP</name>
        <dbReference type="ChEBI" id="CHEBI:37565"/>
    </ligand>
</feature>
<feature type="binding site" evidence="1">
    <location>
        <position position="256"/>
    </location>
    <ligand>
        <name>Mg(2+)</name>
        <dbReference type="ChEBI" id="CHEBI:18420"/>
    </ligand>
</feature>
<feature type="binding site" evidence="1">
    <location>
        <begin position="275"/>
        <end position="278"/>
    </location>
    <ligand>
        <name>GTP</name>
        <dbReference type="ChEBI" id="CHEBI:37565"/>
    </ligand>
</feature>
<feature type="binding site" evidence="1">
    <location>
        <position position="442"/>
    </location>
    <ligand>
        <name>(6S)-5-formyl-5,6,7,8-tetrahydrofolate</name>
        <dbReference type="ChEBI" id="CHEBI:57457"/>
    </ligand>
</feature>
<sequence>MSEIGSYHDTIFALSSGRLPSGVAVIRISGPKTRFVYETICQAIPEPRHAALLTFRSRNGDAIDRGLTLFFPAPHSFTGEDCAEFHLHGGKAVVEKMLAVLGELPGCRIAEAGEFTRRAFANGKMDLTIAEGLADLIAAETEGQRRLAMQVASGNQRKLYSEWRQRLINARAFIEAELDFADESDVPGSVSMQVWQQLSALKHEIEHHIASGKRAAMLRDGLHVVIVGAPNAGKSSLLNFLAGRDVAIISEEAGTTRDLLEVKLDLGGIPVYVTDTAGLRETDSVVEKIGIERARARMAEADLVLSLEDMSGPVSVTVEKIEAETWLIGTKADLGGSASGLWKYHISTMTGSGLEQLLDALQAFAEAKIGQIEDAVPTRQRHINLLRATIEEIEKAIEGDDLPLELRAENMRLASQFLGRITGDVDVEEILDVMFSQFCIGK</sequence>
<comment type="function">
    <text evidence="1">Exhibits a very high intrinsic GTPase hydrolysis rate. Involved in the addition of a carboxymethylaminomethyl (cmnm) group at the wobble position (U34) of certain tRNAs, forming tRNA-cmnm(5)s(2)U34.</text>
</comment>
<comment type="cofactor">
    <cofactor evidence="1">
        <name>K(+)</name>
        <dbReference type="ChEBI" id="CHEBI:29103"/>
    </cofactor>
    <text evidence="1">Binds 1 potassium ion per subunit.</text>
</comment>
<comment type="subunit">
    <text evidence="1">Homodimer. Heterotetramer of two MnmE and two MnmG subunits.</text>
</comment>
<comment type="subcellular location">
    <subcellularLocation>
        <location evidence="1">Cytoplasm</location>
    </subcellularLocation>
</comment>
<comment type="similarity">
    <text evidence="1">Belongs to the TRAFAC class TrmE-Era-EngA-EngB-Septin-like GTPase superfamily. TrmE GTPase family.</text>
</comment>
<dbReference type="EC" id="3.6.-.-" evidence="1"/>
<dbReference type="EMBL" id="AM040264">
    <property type="protein sequence ID" value="CAJ12019.1"/>
    <property type="molecule type" value="Genomic_DNA"/>
</dbReference>
<dbReference type="RefSeq" id="WP_002965126.1">
    <property type="nucleotide sequence ID" value="NZ_KN046823.1"/>
</dbReference>
<dbReference type="SMR" id="Q2YR11"/>
<dbReference type="STRING" id="359391.BAB1_2063"/>
<dbReference type="GeneID" id="93017627"/>
<dbReference type="KEGG" id="bmf:BAB1_2063"/>
<dbReference type="PATRIC" id="fig|359391.11.peg.1295"/>
<dbReference type="HOGENOM" id="CLU_019624_3_1_5"/>
<dbReference type="PhylomeDB" id="Q2YR11"/>
<dbReference type="Proteomes" id="UP000002719">
    <property type="component" value="Chromosome I"/>
</dbReference>
<dbReference type="GO" id="GO:0005737">
    <property type="term" value="C:cytoplasm"/>
    <property type="evidence" value="ECO:0007669"/>
    <property type="project" value="UniProtKB-SubCell"/>
</dbReference>
<dbReference type="GO" id="GO:0005525">
    <property type="term" value="F:GTP binding"/>
    <property type="evidence" value="ECO:0007669"/>
    <property type="project" value="UniProtKB-UniRule"/>
</dbReference>
<dbReference type="GO" id="GO:0003924">
    <property type="term" value="F:GTPase activity"/>
    <property type="evidence" value="ECO:0007669"/>
    <property type="project" value="UniProtKB-UniRule"/>
</dbReference>
<dbReference type="GO" id="GO:0046872">
    <property type="term" value="F:metal ion binding"/>
    <property type="evidence" value="ECO:0007669"/>
    <property type="project" value="UniProtKB-KW"/>
</dbReference>
<dbReference type="GO" id="GO:0030488">
    <property type="term" value="P:tRNA methylation"/>
    <property type="evidence" value="ECO:0007669"/>
    <property type="project" value="TreeGrafter"/>
</dbReference>
<dbReference type="GO" id="GO:0002098">
    <property type="term" value="P:tRNA wobble uridine modification"/>
    <property type="evidence" value="ECO:0007669"/>
    <property type="project" value="TreeGrafter"/>
</dbReference>
<dbReference type="CDD" id="cd04164">
    <property type="entry name" value="trmE"/>
    <property type="match status" value="1"/>
</dbReference>
<dbReference type="CDD" id="cd14858">
    <property type="entry name" value="TrmE_N"/>
    <property type="match status" value="1"/>
</dbReference>
<dbReference type="FunFam" id="3.30.1360.120:FF:000007">
    <property type="entry name" value="tRNA modification GTPase GTPBP3, mitochondrial"/>
    <property type="match status" value="1"/>
</dbReference>
<dbReference type="Gene3D" id="3.40.50.300">
    <property type="entry name" value="P-loop containing nucleotide triphosphate hydrolases"/>
    <property type="match status" value="1"/>
</dbReference>
<dbReference type="Gene3D" id="3.30.1360.120">
    <property type="entry name" value="Probable tRNA modification gtpase trme, domain 1"/>
    <property type="match status" value="1"/>
</dbReference>
<dbReference type="Gene3D" id="1.20.120.430">
    <property type="entry name" value="tRNA modification GTPase MnmE domain 2"/>
    <property type="match status" value="1"/>
</dbReference>
<dbReference type="HAMAP" id="MF_00379">
    <property type="entry name" value="GTPase_MnmE"/>
    <property type="match status" value="1"/>
</dbReference>
<dbReference type="InterPro" id="IPR031168">
    <property type="entry name" value="G_TrmE"/>
</dbReference>
<dbReference type="InterPro" id="IPR006073">
    <property type="entry name" value="GTP-bd"/>
</dbReference>
<dbReference type="InterPro" id="IPR018948">
    <property type="entry name" value="GTP-bd_TrmE_N"/>
</dbReference>
<dbReference type="InterPro" id="IPR004520">
    <property type="entry name" value="GTPase_MnmE"/>
</dbReference>
<dbReference type="InterPro" id="IPR027368">
    <property type="entry name" value="MnmE_dom2"/>
</dbReference>
<dbReference type="InterPro" id="IPR025867">
    <property type="entry name" value="MnmE_helical"/>
</dbReference>
<dbReference type="InterPro" id="IPR027417">
    <property type="entry name" value="P-loop_NTPase"/>
</dbReference>
<dbReference type="InterPro" id="IPR005225">
    <property type="entry name" value="Small_GTP-bd"/>
</dbReference>
<dbReference type="InterPro" id="IPR027266">
    <property type="entry name" value="TrmE/GcvT_dom1"/>
</dbReference>
<dbReference type="NCBIfam" id="TIGR00450">
    <property type="entry name" value="mnmE_trmE_thdF"/>
    <property type="match status" value="1"/>
</dbReference>
<dbReference type="NCBIfam" id="NF003661">
    <property type="entry name" value="PRK05291.1-3"/>
    <property type="match status" value="1"/>
</dbReference>
<dbReference type="NCBIfam" id="TIGR00231">
    <property type="entry name" value="small_GTP"/>
    <property type="match status" value="1"/>
</dbReference>
<dbReference type="PANTHER" id="PTHR42714">
    <property type="entry name" value="TRNA MODIFICATION GTPASE GTPBP3"/>
    <property type="match status" value="1"/>
</dbReference>
<dbReference type="PANTHER" id="PTHR42714:SF2">
    <property type="entry name" value="TRNA MODIFICATION GTPASE GTPBP3, MITOCHONDRIAL"/>
    <property type="match status" value="1"/>
</dbReference>
<dbReference type="Pfam" id="PF01926">
    <property type="entry name" value="MMR_HSR1"/>
    <property type="match status" value="1"/>
</dbReference>
<dbReference type="Pfam" id="PF12631">
    <property type="entry name" value="MnmE_helical"/>
    <property type="match status" value="1"/>
</dbReference>
<dbReference type="Pfam" id="PF10396">
    <property type="entry name" value="TrmE_N"/>
    <property type="match status" value="1"/>
</dbReference>
<dbReference type="SUPFAM" id="SSF52540">
    <property type="entry name" value="P-loop containing nucleoside triphosphate hydrolases"/>
    <property type="match status" value="1"/>
</dbReference>
<dbReference type="SUPFAM" id="SSF116878">
    <property type="entry name" value="TrmE connector domain"/>
    <property type="match status" value="1"/>
</dbReference>
<dbReference type="PROSITE" id="PS51709">
    <property type="entry name" value="G_TRME"/>
    <property type="match status" value="1"/>
</dbReference>
<name>MNME_BRUA2</name>
<keyword id="KW-0963">Cytoplasm</keyword>
<keyword id="KW-0342">GTP-binding</keyword>
<keyword id="KW-0378">Hydrolase</keyword>
<keyword id="KW-0460">Magnesium</keyword>
<keyword id="KW-0479">Metal-binding</keyword>
<keyword id="KW-0547">Nucleotide-binding</keyword>
<keyword id="KW-0630">Potassium</keyword>
<keyword id="KW-1185">Reference proteome</keyword>
<keyword id="KW-0819">tRNA processing</keyword>
<evidence type="ECO:0000255" key="1">
    <source>
        <dbReference type="HAMAP-Rule" id="MF_00379"/>
    </source>
</evidence>
<gene>
    <name evidence="1" type="primary">mnmE</name>
    <name evidence="1" type="synonym">trmE</name>
    <name type="ordered locus">BAB1_2063</name>
</gene>
<reference key="1">
    <citation type="journal article" date="2005" name="Infect. Immun.">
        <title>Whole-genome analyses of speciation events in pathogenic Brucellae.</title>
        <authorList>
            <person name="Chain P.S."/>
            <person name="Comerci D.J."/>
            <person name="Tolmasky M.E."/>
            <person name="Larimer F.W."/>
            <person name="Malfatti S.A."/>
            <person name="Vergez L.M."/>
            <person name="Aguero F."/>
            <person name="Land M.L."/>
            <person name="Ugalde R.A."/>
            <person name="Garcia E."/>
        </authorList>
    </citation>
    <scope>NUCLEOTIDE SEQUENCE [LARGE SCALE GENOMIC DNA]</scope>
    <source>
        <strain>2308</strain>
    </source>
</reference>
<proteinExistence type="inferred from homology"/>
<protein>
    <recommendedName>
        <fullName evidence="1">tRNA modification GTPase MnmE</fullName>
        <ecNumber evidence="1">3.6.-.-</ecNumber>
    </recommendedName>
</protein>
<organism>
    <name type="scientific">Brucella abortus (strain 2308)</name>
    <dbReference type="NCBI Taxonomy" id="359391"/>
    <lineage>
        <taxon>Bacteria</taxon>
        <taxon>Pseudomonadati</taxon>
        <taxon>Pseudomonadota</taxon>
        <taxon>Alphaproteobacteria</taxon>
        <taxon>Hyphomicrobiales</taxon>
        <taxon>Brucellaceae</taxon>
        <taxon>Brucella/Ochrobactrum group</taxon>
        <taxon>Brucella</taxon>
    </lineage>
</organism>
<accession>Q2YR11</accession>